<sequence length="354" mass="39234">MTELKNDRYLRALLRQPVDVTPVWMMRQAGRYLPEYKATRAQAGDFMSLCKNAELACEVTLQPLRRYPLDAAILFSDILTVPDAMGLGLYFEAGEGPRFTSPVTCKADVDKLPIPDPEDELGYVMNAVRTIRRELKGEVPLIGFSGSPWTLATYMVEGGSSKAFTVIKKMMYADPQALHALLDKLAKSVTLYLNAQIKAGAQAVMIFDTWGGVLTGRDYQQFSLYYMHKIVDGLLRENDGRRVPVTLFTKGGGQWLEAMAETGCDALGLDWTTDIADARRRVGNKVALQGNMDPSMLYAPPARIEEEVASILAGFGHGEGHVFNLGHGIHQDVPPEHAGVFVEAVHRLSEQYHR</sequence>
<dbReference type="EC" id="4.1.1.37" evidence="1"/>
<dbReference type="EMBL" id="AE014075">
    <property type="protein sequence ID" value="AAN83382.1"/>
    <property type="molecule type" value="Genomic_DNA"/>
</dbReference>
<dbReference type="RefSeq" id="WP_000137653.1">
    <property type="nucleotide sequence ID" value="NZ_CP051263.1"/>
</dbReference>
<dbReference type="SMR" id="Q8FB74"/>
<dbReference type="STRING" id="199310.c4954"/>
<dbReference type="KEGG" id="ecc:c4954"/>
<dbReference type="eggNOG" id="COG0407">
    <property type="taxonomic scope" value="Bacteria"/>
</dbReference>
<dbReference type="HOGENOM" id="CLU_040933_0_0_6"/>
<dbReference type="BioCyc" id="ECOL199310:C4954-MONOMER"/>
<dbReference type="UniPathway" id="UPA00251">
    <property type="reaction ID" value="UER00321"/>
</dbReference>
<dbReference type="Proteomes" id="UP000001410">
    <property type="component" value="Chromosome"/>
</dbReference>
<dbReference type="GO" id="GO:0005829">
    <property type="term" value="C:cytosol"/>
    <property type="evidence" value="ECO:0007669"/>
    <property type="project" value="TreeGrafter"/>
</dbReference>
<dbReference type="GO" id="GO:0004853">
    <property type="term" value="F:uroporphyrinogen decarboxylase activity"/>
    <property type="evidence" value="ECO:0007669"/>
    <property type="project" value="UniProtKB-UniRule"/>
</dbReference>
<dbReference type="GO" id="GO:0019353">
    <property type="term" value="P:protoporphyrinogen IX biosynthetic process from glutamate"/>
    <property type="evidence" value="ECO:0007669"/>
    <property type="project" value="TreeGrafter"/>
</dbReference>
<dbReference type="CDD" id="cd00717">
    <property type="entry name" value="URO-D"/>
    <property type="match status" value="1"/>
</dbReference>
<dbReference type="FunFam" id="3.20.20.210:FF:000001">
    <property type="entry name" value="Uroporphyrinogen decarboxylase"/>
    <property type="match status" value="1"/>
</dbReference>
<dbReference type="Gene3D" id="3.20.20.210">
    <property type="match status" value="1"/>
</dbReference>
<dbReference type="HAMAP" id="MF_00218">
    <property type="entry name" value="URO_D"/>
    <property type="match status" value="1"/>
</dbReference>
<dbReference type="InterPro" id="IPR038071">
    <property type="entry name" value="UROD/MetE-like_sf"/>
</dbReference>
<dbReference type="InterPro" id="IPR006361">
    <property type="entry name" value="Uroporphyrinogen_deCO2ase_HemE"/>
</dbReference>
<dbReference type="InterPro" id="IPR000257">
    <property type="entry name" value="Uroporphyrinogen_deCOase"/>
</dbReference>
<dbReference type="NCBIfam" id="TIGR01464">
    <property type="entry name" value="hemE"/>
    <property type="match status" value="1"/>
</dbReference>
<dbReference type="PANTHER" id="PTHR21091">
    <property type="entry name" value="METHYLTETRAHYDROFOLATE:HOMOCYSTEINE METHYLTRANSFERASE RELATED"/>
    <property type="match status" value="1"/>
</dbReference>
<dbReference type="PANTHER" id="PTHR21091:SF169">
    <property type="entry name" value="UROPORPHYRINOGEN DECARBOXYLASE"/>
    <property type="match status" value="1"/>
</dbReference>
<dbReference type="Pfam" id="PF01208">
    <property type="entry name" value="URO-D"/>
    <property type="match status" value="1"/>
</dbReference>
<dbReference type="SUPFAM" id="SSF51726">
    <property type="entry name" value="UROD/MetE-like"/>
    <property type="match status" value="1"/>
</dbReference>
<dbReference type="PROSITE" id="PS00906">
    <property type="entry name" value="UROD_1"/>
    <property type="match status" value="1"/>
</dbReference>
<dbReference type="PROSITE" id="PS00907">
    <property type="entry name" value="UROD_2"/>
    <property type="match status" value="1"/>
</dbReference>
<comment type="function">
    <text evidence="1">Catalyzes the decarboxylation of four acetate groups of uroporphyrinogen-III to yield coproporphyrinogen-III.</text>
</comment>
<comment type="catalytic activity">
    <reaction evidence="1">
        <text>uroporphyrinogen III + 4 H(+) = coproporphyrinogen III + 4 CO2</text>
        <dbReference type="Rhea" id="RHEA:19865"/>
        <dbReference type="ChEBI" id="CHEBI:15378"/>
        <dbReference type="ChEBI" id="CHEBI:16526"/>
        <dbReference type="ChEBI" id="CHEBI:57308"/>
        <dbReference type="ChEBI" id="CHEBI:57309"/>
        <dbReference type="EC" id="4.1.1.37"/>
    </reaction>
</comment>
<comment type="pathway">
    <text evidence="1">Porphyrin-containing compound metabolism; protoporphyrin-IX biosynthesis; coproporphyrinogen-III from 5-aminolevulinate: step 4/4.</text>
</comment>
<comment type="subunit">
    <text evidence="1">Homodimer.</text>
</comment>
<comment type="subcellular location">
    <subcellularLocation>
        <location evidence="1">Cytoplasm</location>
    </subcellularLocation>
</comment>
<comment type="similarity">
    <text evidence="1">Belongs to the uroporphyrinogen decarboxylase family.</text>
</comment>
<evidence type="ECO:0000255" key="1">
    <source>
        <dbReference type="HAMAP-Rule" id="MF_00218"/>
    </source>
</evidence>
<accession>Q8FB74</accession>
<keyword id="KW-0963">Cytoplasm</keyword>
<keyword id="KW-0210">Decarboxylase</keyword>
<keyword id="KW-0456">Lyase</keyword>
<keyword id="KW-0627">Porphyrin biosynthesis</keyword>
<keyword id="KW-1185">Reference proteome</keyword>
<feature type="chain" id="PRO_0000187604" description="Uroporphyrinogen decarboxylase">
    <location>
        <begin position="1"/>
        <end position="354"/>
    </location>
</feature>
<feature type="binding site" evidence="1">
    <location>
        <begin position="27"/>
        <end position="31"/>
    </location>
    <ligand>
        <name>substrate</name>
    </ligand>
</feature>
<feature type="binding site" evidence="1">
    <location>
        <position position="46"/>
    </location>
    <ligand>
        <name>substrate</name>
    </ligand>
</feature>
<feature type="binding site" evidence="1">
    <location>
        <position position="77"/>
    </location>
    <ligand>
        <name>substrate</name>
    </ligand>
</feature>
<feature type="binding site" evidence="1">
    <location>
        <position position="154"/>
    </location>
    <ligand>
        <name>substrate</name>
    </ligand>
</feature>
<feature type="binding site" evidence="1">
    <location>
        <position position="209"/>
    </location>
    <ligand>
        <name>substrate</name>
    </ligand>
</feature>
<feature type="binding site" evidence="1">
    <location>
        <position position="327"/>
    </location>
    <ligand>
        <name>substrate</name>
    </ligand>
</feature>
<feature type="site" description="Transition state stabilizer" evidence="1">
    <location>
        <position position="77"/>
    </location>
</feature>
<gene>
    <name evidence="1" type="primary">hemE</name>
    <name type="ordered locus">c4954</name>
</gene>
<organism>
    <name type="scientific">Escherichia coli O6:H1 (strain CFT073 / ATCC 700928 / UPEC)</name>
    <dbReference type="NCBI Taxonomy" id="199310"/>
    <lineage>
        <taxon>Bacteria</taxon>
        <taxon>Pseudomonadati</taxon>
        <taxon>Pseudomonadota</taxon>
        <taxon>Gammaproteobacteria</taxon>
        <taxon>Enterobacterales</taxon>
        <taxon>Enterobacteriaceae</taxon>
        <taxon>Escherichia</taxon>
    </lineage>
</organism>
<proteinExistence type="inferred from homology"/>
<name>DCUP_ECOL6</name>
<reference key="1">
    <citation type="journal article" date="2002" name="Proc. Natl. Acad. Sci. U.S.A.">
        <title>Extensive mosaic structure revealed by the complete genome sequence of uropathogenic Escherichia coli.</title>
        <authorList>
            <person name="Welch R.A."/>
            <person name="Burland V."/>
            <person name="Plunkett G. III"/>
            <person name="Redford P."/>
            <person name="Roesch P."/>
            <person name="Rasko D."/>
            <person name="Buckles E.L."/>
            <person name="Liou S.-R."/>
            <person name="Boutin A."/>
            <person name="Hackett J."/>
            <person name="Stroud D."/>
            <person name="Mayhew G.F."/>
            <person name="Rose D.J."/>
            <person name="Zhou S."/>
            <person name="Schwartz D.C."/>
            <person name="Perna N.T."/>
            <person name="Mobley H.L.T."/>
            <person name="Donnenberg M.S."/>
            <person name="Blattner F.R."/>
        </authorList>
    </citation>
    <scope>NUCLEOTIDE SEQUENCE [LARGE SCALE GENOMIC DNA]</scope>
    <source>
        <strain>CFT073 / ATCC 700928 / UPEC</strain>
    </source>
</reference>
<protein>
    <recommendedName>
        <fullName evidence="1">Uroporphyrinogen decarboxylase</fullName>
        <shortName evidence="1">UPD</shortName>
        <shortName evidence="1">URO-D</shortName>
        <ecNumber evidence="1">4.1.1.37</ecNumber>
    </recommendedName>
</protein>